<gene>
    <name type="primary">Rbp2</name>
    <name type="synonym">Crbpii</name>
</gene>
<dbReference type="EMBL" id="M13949">
    <property type="protein sequence ID" value="AAA42022.1"/>
    <property type="molecule type" value="mRNA"/>
</dbReference>
<dbReference type="EMBL" id="M16402">
    <property type="protein sequence ID" value="AAA40963.1"/>
    <property type="status" value="ALT_SEQ"/>
    <property type="molecule type" value="Genomic_DNA"/>
</dbReference>
<dbReference type="EMBL" id="M16400">
    <property type="protein sequence ID" value="AAA40963.1"/>
    <property type="status" value="JOINED"/>
    <property type="molecule type" value="Genomic_DNA"/>
</dbReference>
<dbReference type="EMBL" id="M16401">
    <property type="protein sequence ID" value="AAA40963.1"/>
    <property type="status" value="JOINED"/>
    <property type="molecule type" value="Genomic_DNA"/>
</dbReference>
<dbReference type="PIR" id="A92626">
    <property type="entry name" value="A29065"/>
</dbReference>
<dbReference type="RefSeq" id="NP_036772.2">
    <property type="nucleotide sequence ID" value="NM_012640.2"/>
</dbReference>
<dbReference type="RefSeq" id="XP_006243669.1">
    <property type="nucleotide sequence ID" value="XM_006243607.3"/>
</dbReference>
<dbReference type="RefSeq" id="XP_017450964.1">
    <property type="nucleotide sequence ID" value="XM_017595475.1"/>
</dbReference>
<dbReference type="RefSeq" id="XP_038936760.1">
    <property type="nucleotide sequence ID" value="XM_039080832.2"/>
</dbReference>
<dbReference type="PDB" id="1B4M">
    <property type="method" value="NMR"/>
    <property type="chains" value="A=1-134"/>
</dbReference>
<dbReference type="PDB" id="1EII">
    <property type="method" value="NMR"/>
    <property type="chains" value="A=1-134"/>
</dbReference>
<dbReference type="PDB" id="1OPA">
    <property type="method" value="X-ray"/>
    <property type="resolution" value="1.90 A"/>
    <property type="chains" value="A/B=1-134"/>
</dbReference>
<dbReference type="PDB" id="1OPB">
    <property type="method" value="X-ray"/>
    <property type="resolution" value="1.90 A"/>
    <property type="chains" value="A/B/C/D=1-134"/>
</dbReference>
<dbReference type="PDBsum" id="1B4M"/>
<dbReference type="PDBsum" id="1EII"/>
<dbReference type="PDBsum" id="1OPA"/>
<dbReference type="PDBsum" id="1OPB"/>
<dbReference type="BMRB" id="P06768"/>
<dbReference type="SMR" id="P06768"/>
<dbReference type="FunCoup" id="P06768">
    <property type="interactions" value="30"/>
</dbReference>
<dbReference type="STRING" id="10116.ENSRNOP00000018755"/>
<dbReference type="PhosphoSitePlus" id="P06768"/>
<dbReference type="PaxDb" id="10116-ENSRNOP00000018755"/>
<dbReference type="Ensembl" id="ENSRNOT00000018755.7">
    <property type="protein sequence ID" value="ENSRNOP00000018755.5"/>
    <property type="gene ID" value="ENSRNOG00000013932.7"/>
</dbReference>
<dbReference type="GeneID" id="24710"/>
<dbReference type="KEGG" id="rno:24710"/>
<dbReference type="UCSC" id="RGD:3544">
    <property type="organism name" value="rat"/>
</dbReference>
<dbReference type="AGR" id="RGD:3544"/>
<dbReference type="CTD" id="5948"/>
<dbReference type="RGD" id="3544">
    <property type="gene designation" value="Rbp2"/>
</dbReference>
<dbReference type="eggNOG" id="KOG4015">
    <property type="taxonomic scope" value="Eukaryota"/>
</dbReference>
<dbReference type="GeneTree" id="ENSGT00940000160165"/>
<dbReference type="HOGENOM" id="CLU_113772_5_1_1"/>
<dbReference type="InParanoid" id="P06768"/>
<dbReference type="OMA" id="EFEECTK"/>
<dbReference type="OrthoDB" id="354351at2759"/>
<dbReference type="PhylomeDB" id="P06768"/>
<dbReference type="TreeFam" id="TF316894"/>
<dbReference type="Reactome" id="R-RNO-975634">
    <property type="pathway name" value="Retinoid metabolism and transport"/>
</dbReference>
<dbReference type="EvolutionaryTrace" id="P06768"/>
<dbReference type="PRO" id="PR:P06768"/>
<dbReference type="Proteomes" id="UP000002494">
    <property type="component" value="Chromosome 8"/>
</dbReference>
<dbReference type="Bgee" id="ENSRNOG00000013932">
    <property type="expression patterns" value="Expressed in jejunum and 14 other cell types or tissues"/>
</dbReference>
<dbReference type="GO" id="GO:0005829">
    <property type="term" value="C:cytosol"/>
    <property type="evidence" value="ECO:0000266"/>
    <property type="project" value="RGD"/>
</dbReference>
<dbReference type="GO" id="GO:0005634">
    <property type="term" value="C:nucleus"/>
    <property type="evidence" value="ECO:0000318"/>
    <property type="project" value="GO_Central"/>
</dbReference>
<dbReference type="GO" id="GO:0005504">
    <property type="term" value="F:fatty acid binding"/>
    <property type="evidence" value="ECO:0000318"/>
    <property type="project" value="GO_Central"/>
</dbReference>
<dbReference type="GO" id="GO:0008289">
    <property type="term" value="F:lipid binding"/>
    <property type="evidence" value="ECO:0000266"/>
    <property type="project" value="RGD"/>
</dbReference>
<dbReference type="GO" id="GO:0016918">
    <property type="term" value="F:retinal binding"/>
    <property type="evidence" value="ECO:0007669"/>
    <property type="project" value="UniProtKB-KW"/>
</dbReference>
<dbReference type="GO" id="GO:0019841">
    <property type="term" value="F:retinol binding"/>
    <property type="evidence" value="ECO:0000314"/>
    <property type="project" value="RGD"/>
</dbReference>
<dbReference type="GO" id="GO:0015908">
    <property type="term" value="P:fatty acid transport"/>
    <property type="evidence" value="ECO:0000318"/>
    <property type="project" value="GO_Central"/>
</dbReference>
<dbReference type="GO" id="GO:0001523">
    <property type="term" value="P:retinoid metabolic process"/>
    <property type="evidence" value="ECO:0000266"/>
    <property type="project" value="RGD"/>
</dbReference>
<dbReference type="GO" id="GO:0042572">
    <property type="term" value="P:retinol metabolic process"/>
    <property type="evidence" value="ECO:0000304"/>
    <property type="project" value="RGD"/>
</dbReference>
<dbReference type="CDD" id="cd19463">
    <property type="entry name" value="CRBP2"/>
    <property type="match status" value="1"/>
</dbReference>
<dbReference type="FunFam" id="2.40.128.20:FF:000001">
    <property type="entry name" value="Fatty acid-binding protein, adipocyte"/>
    <property type="match status" value="1"/>
</dbReference>
<dbReference type="Gene3D" id="2.40.128.20">
    <property type="match status" value="1"/>
</dbReference>
<dbReference type="InterPro" id="IPR012674">
    <property type="entry name" value="Calycin"/>
</dbReference>
<dbReference type="InterPro" id="IPR000463">
    <property type="entry name" value="Fatty_acid-bd"/>
</dbReference>
<dbReference type="InterPro" id="IPR031259">
    <property type="entry name" value="ILBP"/>
</dbReference>
<dbReference type="InterPro" id="IPR000566">
    <property type="entry name" value="Lipocln_cytosolic_FA-bd_dom"/>
</dbReference>
<dbReference type="PANTHER" id="PTHR11955">
    <property type="entry name" value="FATTY ACID BINDING PROTEIN"/>
    <property type="match status" value="1"/>
</dbReference>
<dbReference type="Pfam" id="PF00061">
    <property type="entry name" value="Lipocalin"/>
    <property type="match status" value="1"/>
</dbReference>
<dbReference type="PRINTS" id="PR00178">
    <property type="entry name" value="FATTYACIDBP"/>
</dbReference>
<dbReference type="SUPFAM" id="SSF50814">
    <property type="entry name" value="Lipocalins"/>
    <property type="match status" value="1"/>
</dbReference>
<dbReference type="PROSITE" id="PS00214">
    <property type="entry name" value="FABP"/>
    <property type="match status" value="1"/>
</dbReference>
<evidence type="ECO:0000250" key="1">
    <source>
        <dbReference type="UniProtKB" id="P50120"/>
    </source>
</evidence>
<evidence type="ECO:0000269" key="2">
    <source>
    </source>
</evidence>
<evidence type="ECO:0000269" key="3">
    <source>
    </source>
</evidence>
<evidence type="ECO:0000305" key="4"/>
<evidence type="ECO:0007829" key="5">
    <source>
        <dbReference type="PDB" id="1OPA"/>
    </source>
</evidence>
<organism>
    <name type="scientific">Rattus norvegicus</name>
    <name type="common">Rat</name>
    <dbReference type="NCBI Taxonomy" id="10116"/>
    <lineage>
        <taxon>Eukaryota</taxon>
        <taxon>Metazoa</taxon>
        <taxon>Chordata</taxon>
        <taxon>Craniata</taxon>
        <taxon>Vertebrata</taxon>
        <taxon>Euteleostomi</taxon>
        <taxon>Mammalia</taxon>
        <taxon>Eutheria</taxon>
        <taxon>Euarchontoglires</taxon>
        <taxon>Glires</taxon>
        <taxon>Rodentia</taxon>
        <taxon>Myomorpha</taxon>
        <taxon>Muroidea</taxon>
        <taxon>Muridae</taxon>
        <taxon>Murinae</taxon>
        <taxon>Rattus</taxon>
    </lineage>
</organism>
<accession>P06768</accession>
<proteinExistence type="evidence at protein level"/>
<feature type="initiator methionine" description="Removed" evidence="2">
    <location>
        <position position="1"/>
    </location>
</feature>
<feature type="chain" id="PRO_0000067398" description="Retinol-binding protein 2">
    <location>
        <begin position="2"/>
        <end position="134"/>
    </location>
</feature>
<feature type="binding site" evidence="1">
    <location>
        <position position="41"/>
    </location>
    <ligand>
        <name>all-trans-retinol</name>
        <dbReference type="ChEBI" id="CHEBI:17336"/>
    </ligand>
</feature>
<feature type="binding site" evidence="3">
    <location>
        <position position="109"/>
    </location>
    <ligand>
        <name>all-trans-retinol</name>
        <dbReference type="ChEBI" id="CHEBI:17336"/>
    </ligand>
</feature>
<feature type="strand" evidence="5">
    <location>
        <begin position="7"/>
        <end position="16"/>
    </location>
</feature>
<feature type="helix" evidence="5">
    <location>
        <begin position="17"/>
        <end position="23"/>
    </location>
</feature>
<feature type="helix" evidence="5">
    <location>
        <begin position="28"/>
        <end position="34"/>
    </location>
</feature>
<feature type="strand" evidence="5">
    <location>
        <begin position="40"/>
        <end position="46"/>
    </location>
</feature>
<feature type="strand" evidence="5">
    <location>
        <begin position="49"/>
        <end position="55"/>
    </location>
</feature>
<feature type="strand" evidence="5">
    <location>
        <begin position="60"/>
        <end position="66"/>
    </location>
</feature>
<feature type="strand" evidence="5">
    <location>
        <begin position="71"/>
        <end position="74"/>
    </location>
</feature>
<feature type="turn" evidence="5">
    <location>
        <begin position="76"/>
        <end position="79"/>
    </location>
</feature>
<feature type="strand" evidence="5">
    <location>
        <begin position="82"/>
        <end position="90"/>
    </location>
</feature>
<feature type="strand" evidence="5">
    <location>
        <begin position="93"/>
        <end position="102"/>
    </location>
</feature>
<feature type="strand" evidence="5">
    <location>
        <begin position="106"/>
        <end position="112"/>
    </location>
</feature>
<feature type="strand" evidence="5">
    <location>
        <begin position="115"/>
        <end position="122"/>
    </location>
</feature>
<feature type="strand" evidence="5">
    <location>
        <begin position="125"/>
        <end position="133"/>
    </location>
</feature>
<sequence length="134" mass="15585">MTKDQNGTWEMESNENFEGYMKALDIDFATRKIAVRLTQTKIIVQDGDNFKTKTNSTFRNYDLDFTVGVEFDEHTKGLDGRNVKTLVTWEGNTLVCVQKGEKENRGWKQWVEGDKLYLELTCGDQVCRQVFKKK</sequence>
<reference key="1">
    <citation type="journal article" date="1987" name="J. Biol. Chem.">
        <title>The cellular retinol binding protein II gene. Sequence analysis of the rat gene, chromosomal localization in mice and humans, and documentation of its close linkage to the cellular retinol binding protein gene.</title>
        <authorList>
            <person name="Demmer L.A."/>
            <person name="Birkenmeier E.H."/>
            <person name="Sweetser D.A."/>
            <person name="Levin M.S."/>
            <person name="Zollman S."/>
            <person name="Sparkes R.S."/>
            <person name="Mohandas T."/>
            <person name="Lusis A.J."/>
            <person name="Gordon J.I."/>
        </authorList>
    </citation>
    <scope>NUCLEOTIDE SEQUENCE [GENOMIC DNA]</scope>
</reference>
<reference key="2">
    <citation type="journal article" date="1986" name="Proc. Natl. Acad. Sci. U.S.A.">
        <title>Rat cellular retinol-binding protein II: use of a cloned cDNA to define its primary structure, tissue-specific expression, and developmental regulation.</title>
        <authorList>
            <person name="Li E."/>
            <person name="Demmer L.A."/>
            <person name="Sweetser D.A."/>
            <person name="Ong D.E."/>
            <person name="Gordon J.I."/>
        </authorList>
    </citation>
    <scope>NUCLEOTIDE SEQUENCE [MRNA]</scope>
</reference>
<reference key="3">
    <citation type="journal article" date="1989" name="J. Biol. Chem.">
        <title>Purification, primary structure characterization, and cellular distribution of two forms of cellular retinol-binding protein, type II from adult rat small intestine.</title>
        <authorList>
            <person name="Schaefer W.H."/>
            <person name="Kakkad B."/>
            <person name="Crow J.A."/>
            <person name="Blair I.A."/>
            <person name="Ong D.E."/>
        </authorList>
    </citation>
    <scope>PROTEIN SEQUENCE OF 2-134</scope>
</reference>
<reference key="4">
    <citation type="journal article" date="1993" name="J. Mol. Biol.">
        <title>Crystal structures of holo and apo-cellular retinol-binding protein II.</title>
        <authorList>
            <person name="Winter N.S."/>
            <person name="Bratt J.M."/>
            <person name="Banaszak L.J."/>
        </authorList>
    </citation>
    <scope>X-RAY CRYSTALLOGRAPHY (1.9 ANGSTROMS) IN COMPLEX WITH ALL-TRANS-RETINOL</scope>
</reference>
<reference key="5">
    <citation type="journal article" date="1999" name="J. Mol. Biol.">
        <title>The structure and dynamics of rat apo-cellular retinol-binding protein II in solution: comparison with the X-ray structure.</title>
        <authorList>
            <person name="Lu J."/>
            <person name="Lin C.L."/>
            <person name="Tang C."/>
            <person name="Ponder J.W."/>
            <person name="Kao J.L."/>
            <person name="Cistola D.P."/>
            <person name="Li E."/>
        </authorList>
    </citation>
    <scope>STRUCTURE BY NMR</scope>
</reference>
<protein>
    <recommendedName>
        <fullName>Retinol-binding protein 2</fullName>
    </recommendedName>
    <alternativeName>
        <fullName>Cellular retinol-binding protein II</fullName>
        <shortName>CRBP-II</shortName>
    </alternativeName>
</protein>
<comment type="function">
    <text>Intracellular transport of retinol.</text>
</comment>
<comment type="subcellular location">
    <subcellularLocation>
        <location>Cytoplasm</location>
    </subcellularLocation>
</comment>
<comment type="domain">
    <text>Forms a beta-barrel structure that accommodates hydrophobic ligands in its interior.</text>
</comment>
<comment type="similarity">
    <text evidence="4">Belongs to the calycin superfamily. Fatty-acid binding protein (FABP) family.</text>
</comment>
<keyword id="KW-0002">3D-structure</keyword>
<keyword id="KW-0963">Cytoplasm</keyword>
<keyword id="KW-0903">Direct protein sequencing</keyword>
<keyword id="KW-1185">Reference proteome</keyword>
<keyword id="KW-0683">Retinol-binding</keyword>
<keyword id="KW-0813">Transport</keyword>
<keyword id="KW-0845">Vitamin A</keyword>
<name>RET2_RAT</name>